<keyword id="KW-0227">DNA damage</keyword>
<keyword id="KW-0234">DNA repair</keyword>
<keyword id="KW-0235">DNA replication</keyword>
<keyword id="KW-0436">Ligase</keyword>
<keyword id="KW-0460">Magnesium</keyword>
<keyword id="KW-0464">Manganese</keyword>
<keyword id="KW-0479">Metal-binding</keyword>
<keyword id="KW-0520">NAD</keyword>
<keyword id="KW-0862">Zinc</keyword>
<feature type="chain" id="PRO_0000380403" description="DNA ligase">
    <location>
        <begin position="1"/>
        <end position="674"/>
    </location>
</feature>
<feature type="domain" description="BRCT" evidence="1">
    <location>
        <begin position="596"/>
        <end position="674"/>
    </location>
</feature>
<feature type="active site" description="N6-AMP-lysine intermediate" evidence="1">
    <location>
        <position position="123"/>
    </location>
</feature>
<feature type="binding site" evidence="1">
    <location>
        <begin position="42"/>
        <end position="46"/>
    </location>
    <ligand>
        <name>NAD(+)</name>
        <dbReference type="ChEBI" id="CHEBI:57540"/>
    </ligand>
</feature>
<feature type="binding site" evidence="1">
    <location>
        <begin position="91"/>
        <end position="92"/>
    </location>
    <ligand>
        <name>NAD(+)</name>
        <dbReference type="ChEBI" id="CHEBI:57540"/>
    </ligand>
</feature>
<feature type="binding site" evidence="1">
    <location>
        <position position="121"/>
    </location>
    <ligand>
        <name>NAD(+)</name>
        <dbReference type="ChEBI" id="CHEBI:57540"/>
    </ligand>
</feature>
<feature type="binding site" evidence="1">
    <location>
        <position position="144"/>
    </location>
    <ligand>
        <name>NAD(+)</name>
        <dbReference type="ChEBI" id="CHEBI:57540"/>
    </ligand>
</feature>
<feature type="binding site" evidence="1">
    <location>
        <position position="178"/>
    </location>
    <ligand>
        <name>NAD(+)</name>
        <dbReference type="ChEBI" id="CHEBI:57540"/>
    </ligand>
</feature>
<feature type="binding site" evidence="1">
    <location>
        <position position="294"/>
    </location>
    <ligand>
        <name>NAD(+)</name>
        <dbReference type="ChEBI" id="CHEBI:57540"/>
    </ligand>
</feature>
<feature type="binding site" evidence="1">
    <location>
        <position position="318"/>
    </location>
    <ligand>
        <name>NAD(+)</name>
        <dbReference type="ChEBI" id="CHEBI:57540"/>
    </ligand>
</feature>
<feature type="binding site" evidence="1">
    <location>
        <position position="412"/>
    </location>
    <ligand>
        <name>Zn(2+)</name>
        <dbReference type="ChEBI" id="CHEBI:29105"/>
    </ligand>
</feature>
<feature type="binding site" evidence="1">
    <location>
        <position position="415"/>
    </location>
    <ligand>
        <name>Zn(2+)</name>
        <dbReference type="ChEBI" id="CHEBI:29105"/>
    </ligand>
</feature>
<feature type="binding site" evidence="1">
    <location>
        <position position="430"/>
    </location>
    <ligand>
        <name>Zn(2+)</name>
        <dbReference type="ChEBI" id="CHEBI:29105"/>
    </ligand>
</feature>
<feature type="binding site" evidence="1">
    <location>
        <position position="435"/>
    </location>
    <ligand>
        <name>Zn(2+)</name>
        <dbReference type="ChEBI" id="CHEBI:29105"/>
    </ligand>
</feature>
<dbReference type="EC" id="6.5.1.2" evidence="1"/>
<dbReference type="EMBL" id="FM177140">
    <property type="protein sequence ID" value="CAQ66305.1"/>
    <property type="molecule type" value="Genomic_DNA"/>
</dbReference>
<dbReference type="SMR" id="B3WD54"/>
<dbReference type="KEGG" id="lcb:LCABL_12200"/>
<dbReference type="HOGENOM" id="CLU_007764_2_1_9"/>
<dbReference type="GO" id="GO:0005829">
    <property type="term" value="C:cytosol"/>
    <property type="evidence" value="ECO:0007669"/>
    <property type="project" value="TreeGrafter"/>
</dbReference>
<dbReference type="GO" id="GO:0003677">
    <property type="term" value="F:DNA binding"/>
    <property type="evidence" value="ECO:0007669"/>
    <property type="project" value="InterPro"/>
</dbReference>
<dbReference type="GO" id="GO:0003911">
    <property type="term" value="F:DNA ligase (NAD+) activity"/>
    <property type="evidence" value="ECO:0007669"/>
    <property type="project" value="UniProtKB-UniRule"/>
</dbReference>
<dbReference type="GO" id="GO:0046872">
    <property type="term" value="F:metal ion binding"/>
    <property type="evidence" value="ECO:0007669"/>
    <property type="project" value="UniProtKB-KW"/>
</dbReference>
<dbReference type="GO" id="GO:0006281">
    <property type="term" value="P:DNA repair"/>
    <property type="evidence" value="ECO:0007669"/>
    <property type="project" value="UniProtKB-KW"/>
</dbReference>
<dbReference type="GO" id="GO:0006260">
    <property type="term" value="P:DNA replication"/>
    <property type="evidence" value="ECO:0007669"/>
    <property type="project" value="UniProtKB-KW"/>
</dbReference>
<dbReference type="CDD" id="cd17748">
    <property type="entry name" value="BRCT_DNA_ligase_like"/>
    <property type="match status" value="1"/>
</dbReference>
<dbReference type="CDD" id="cd00114">
    <property type="entry name" value="LIGANc"/>
    <property type="match status" value="1"/>
</dbReference>
<dbReference type="FunFam" id="1.10.150.20:FF:000006">
    <property type="entry name" value="DNA ligase"/>
    <property type="match status" value="1"/>
</dbReference>
<dbReference type="FunFam" id="1.10.150.20:FF:000007">
    <property type="entry name" value="DNA ligase"/>
    <property type="match status" value="1"/>
</dbReference>
<dbReference type="FunFam" id="2.40.50.140:FF:000012">
    <property type="entry name" value="DNA ligase"/>
    <property type="match status" value="1"/>
</dbReference>
<dbReference type="FunFam" id="3.30.470.30:FF:000001">
    <property type="entry name" value="DNA ligase"/>
    <property type="match status" value="1"/>
</dbReference>
<dbReference type="Gene3D" id="6.20.10.30">
    <property type="match status" value="1"/>
</dbReference>
<dbReference type="Gene3D" id="1.10.150.20">
    <property type="entry name" value="5' to 3' exonuclease, C-terminal subdomain"/>
    <property type="match status" value="2"/>
</dbReference>
<dbReference type="Gene3D" id="3.40.50.10190">
    <property type="entry name" value="BRCT domain"/>
    <property type="match status" value="1"/>
</dbReference>
<dbReference type="Gene3D" id="3.30.470.30">
    <property type="entry name" value="DNA ligase/mRNA capping enzyme"/>
    <property type="match status" value="1"/>
</dbReference>
<dbReference type="Gene3D" id="1.10.287.610">
    <property type="entry name" value="Helix hairpin bin"/>
    <property type="match status" value="1"/>
</dbReference>
<dbReference type="Gene3D" id="2.40.50.140">
    <property type="entry name" value="Nucleic acid-binding proteins"/>
    <property type="match status" value="1"/>
</dbReference>
<dbReference type="HAMAP" id="MF_01588">
    <property type="entry name" value="DNA_ligase_A"/>
    <property type="match status" value="1"/>
</dbReference>
<dbReference type="InterPro" id="IPR001357">
    <property type="entry name" value="BRCT_dom"/>
</dbReference>
<dbReference type="InterPro" id="IPR036420">
    <property type="entry name" value="BRCT_dom_sf"/>
</dbReference>
<dbReference type="InterPro" id="IPR041663">
    <property type="entry name" value="DisA/LigA_HHH"/>
</dbReference>
<dbReference type="InterPro" id="IPR001679">
    <property type="entry name" value="DNA_ligase"/>
</dbReference>
<dbReference type="InterPro" id="IPR018239">
    <property type="entry name" value="DNA_ligase_AS"/>
</dbReference>
<dbReference type="InterPro" id="IPR033136">
    <property type="entry name" value="DNA_ligase_CS"/>
</dbReference>
<dbReference type="InterPro" id="IPR013839">
    <property type="entry name" value="DNAligase_adenylation"/>
</dbReference>
<dbReference type="InterPro" id="IPR013840">
    <property type="entry name" value="DNAligase_N"/>
</dbReference>
<dbReference type="InterPro" id="IPR003583">
    <property type="entry name" value="Hlx-hairpin-Hlx_DNA-bd_motif"/>
</dbReference>
<dbReference type="InterPro" id="IPR012340">
    <property type="entry name" value="NA-bd_OB-fold"/>
</dbReference>
<dbReference type="InterPro" id="IPR004150">
    <property type="entry name" value="NAD_DNA_ligase_OB"/>
</dbReference>
<dbReference type="InterPro" id="IPR010994">
    <property type="entry name" value="RuvA_2-like"/>
</dbReference>
<dbReference type="InterPro" id="IPR004149">
    <property type="entry name" value="Znf_DNAligase_C4"/>
</dbReference>
<dbReference type="NCBIfam" id="TIGR00575">
    <property type="entry name" value="dnlj"/>
    <property type="match status" value="1"/>
</dbReference>
<dbReference type="NCBIfam" id="NF005932">
    <property type="entry name" value="PRK07956.1"/>
    <property type="match status" value="1"/>
</dbReference>
<dbReference type="PANTHER" id="PTHR23389">
    <property type="entry name" value="CHROMOSOME TRANSMISSION FIDELITY FACTOR 18"/>
    <property type="match status" value="1"/>
</dbReference>
<dbReference type="PANTHER" id="PTHR23389:SF9">
    <property type="entry name" value="DNA LIGASE"/>
    <property type="match status" value="1"/>
</dbReference>
<dbReference type="Pfam" id="PF00533">
    <property type="entry name" value="BRCT"/>
    <property type="match status" value="1"/>
</dbReference>
<dbReference type="Pfam" id="PF01653">
    <property type="entry name" value="DNA_ligase_aden"/>
    <property type="match status" value="1"/>
</dbReference>
<dbReference type="Pfam" id="PF03120">
    <property type="entry name" value="DNA_ligase_OB"/>
    <property type="match status" value="1"/>
</dbReference>
<dbReference type="Pfam" id="PF03119">
    <property type="entry name" value="DNA_ligase_ZBD"/>
    <property type="match status" value="1"/>
</dbReference>
<dbReference type="Pfam" id="PF12826">
    <property type="entry name" value="HHH_2"/>
    <property type="match status" value="1"/>
</dbReference>
<dbReference type="PIRSF" id="PIRSF001604">
    <property type="entry name" value="LigA"/>
    <property type="match status" value="1"/>
</dbReference>
<dbReference type="SMART" id="SM00292">
    <property type="entry name" value="BRCT"/>
    <property type="match status" value="1"/>
</dbReference>
<dbReference type="SMART" id="SM00278">
    <property type="entry name" value="HhH1"/>
    <property type="match status" value="3"/>
</dbReference>
<dbReference type="SMART" id="SM00532">
    <property type="entry name" value="LIGANc"/>
    <property type="match status" value="1"/>
</dbReference>
<dbReference type="SUPFAM" id="SSF52113">
    <property type="entry name" value="BRCT domain"/>
    <property type="match status" value="1"/>
</dbReference>
<dbReference type="SUPFAM" id="SSF56091">
    <property type="entry name" value="DNA ligase/mRNA capping enzyme, catalytic domain"/>
    <property type="match status" value="1"/>
</dbReference>
<dbReference type="SUPFAM" id="SSF50249">
    <property type="entry name" value="Nucleic acid-binding proteins"/>
    <property type="match status" value="1"/>
</dbReference>
<dbReference type="SUPFAM" id="SSF47781">
    <property type="entry name" value="RuvA domain 2-like"/>
    <property type="match status" value="1"/>
</dbReference>
<dbReference type="PROSITE" id="PS50172">
    <property type="entry name" value="BRCT"/>
    <property type="match status" value="1"/>
</dbReference>
<dbReference type="PROSITE" id="PS01055">
    <property type="entry name" value="DNA_LIGASE_N1"/>
    <property type="match status" value="1"/>
</dbReference>
<dbReference type="PROSITE" id="PS01056">
    <property type="entry name" value="DNA_LIGASE_N2"/>
    <property type="match status" value="1"/>
</dbReference>
<accession>B3WD54</accession>
<sequence length="674" mass="73640">MLAKPAAQFTLEEAQAEVEKLRKQLNQWRLEYYTKDAPTVTDNVYDDHYRDLQALEEAYPKLVTPDSPTQEVGDVINSDFAKVQHPIPMLSMGDVFSFEELSEWDARMQSNVGHPVDYNVELKIDGLALSLIYENGKLVQGSTRGDGNVGEDVTRNVLTIASVPKQLKQPLSLEVRGECYMPKAAFAKLNARQETEGGTPFANPRNAAAGSLRQLDAKVTAARELDTFIYTLIEPEQFNVTTQHEAIAFMQALGFTTNPSSEVAGDMQAIDTYIKKYTTDRDALPYGIDGIVLKVNDLALQAQLGNTVKVPRWEIAYKFPPEEAETVIHDIVWTVGRTGVVTPTAVMDPVQLAGTTVARATLHNADMIRDKDIRIGDTVMLHKAGDIIPEVSRVLVAKRPVDTPPAPIPEACPSCGQKLVHLDDEVALRCINPMCPAQVQEQLTHFASRNAMNIDGLGPKIVAQLQAKHLVKDVADLYHLTAADLAKLDKFKEKSINNLLSAINNSRQNSVERLIFGLGIRHVGGKAARILAEHFGDLDHLMTASQEAIADVPNIGPTIAEAIVTYFKAATVQKLITQLREADVNLRYTGPTKPVVKDSFVAGKTVVITGKFAEFSRPALTKQLEGLGAKVTGSVSKKTDLLIAGDAAGSKLAKAQSLNVPIMNETELLANLKD</sequence>
<organism>
    <name type="scientific">Lacticaseibacillus casei (strain BL23)</name>
    <name type="common">Lactobacillus casei</name>
    <dbReference type="NCBI Taxonomy" id="543734"/>
    <lineage>
        <taxon>Bacteria</taxon>
        <taxon>Bacillati</taxon>
        <taxon>Bacillota</taxon>
        <taxon>Bacilli</taxon>
        <taxon>Lactobacillales</taxon>
        <taxon>Lactobacillaceae</taxon>
        <taxon>Lacticaseibacillus</taxon>
    </lineage>
</organism>
<comment type="function">
    <text evidence="1">DNA ligase that catalyzes the formation of phosphodiester linkages between 5'-phosphoryl and 3'-hydroxyl groups in double-stranded DNA using NAD as a coenzyme and as the energy source for the reaction. It is essential for DNA replication and repair of damaged DNA.</text>
</comment>
<comment type="catalytic activity">
    <reaction evidence="1">
        <text>NAD(+) + (deoxyribonucleotide)n-3'-hydroxyl + 5'-phospho-(deoxyribonucleotide)m = (deoxyribonucleotide)n+m + AMP + beta-nicotinamide D-nucleotide.</text>
        <dbReference type="EC" id="6.5.1.2"/>
    </reaction>
</comment>
<comment type="cofactor">
    <cofactor evidence="1">
        <name>Mg(2+)</name>
        <dbReference type="ChEBI" id="CHEBI:18420"/>
    </cofactor>
    <cofactor evidence="1">
        <name>Mn(2+)</name>
        <dbReference type="ChEBI" id="CHEBI:29035"/>
    </cofactor>
</comment>
<comment type="similarity">
    <text evidence="1">Belongs to the NAD-dependent DNA ligase family. LigA subfamily.</text>
</comment>
<proteinExistence type="inferred from homology"/>
<protein>
    <recommendedName>
        <fullName evidence="1">DNA ligase</fullName>
        <ecNumber evidence="1">6.5.1.2</ecNumber>
    </recommendedName>
    <alternativeName>
        <fullName evidence="1">Polydeoxyribonucleotide synthase [NAD(+)]</fullName>
    </alternativeName>
</protein>
<gene>
    <name evidence="1" type="primary">ligA</name>
    <name type="ordered locus">LCABL_12200</name>
</gene>
<evidence type="ECO:0000255" key="1">
    <source>
        <dbReference type="HAMAP-Rule" id="MF_01588"/>
    </source>
</evidence>
<reference key="1">
    <citation type="submission" date="2008-06" db="EMBL/GenBank/DDBJ databases">
        <title>Lactobacillus casei BL23 complete genome sequence.</title>
        <authorList>
            <person name="Maze A."/>
            <person name="Boel G."/>
            <person name="Bourand A."/>
            <person name="Loux V."/>
            <person name="Gibrat J.F."/>
            <person name="Zuniga M."/>
            <person name="Hartke A."/>
            <person name="Deutscher J."/>
        </authorList>
    </citation>
    <scope>NUCLEOTIDE SEQUENCE [LARGE SCALE GENOMIC DNA]</scope>
    <source>
        <strain>BL23</strain>
    </source>
</reference>
<name>DNLJ_LACCB</name>